<reference key="1">
    <citation type="journal article" date="2009" name="Proc. Natl. Acad. Sci. U.S.A.">
        <title>Hamiltonella defensa, genome evolution of protective bacterial endosymbiont from pathogenic ancestors.</title>
        <authorList>
            <person name="Degnan P.H."/>
            <person name="Yu Y."/>
            <person name="Sisneros N."/>
            <person name="Wing R.A."/>
            <person name="Moran N.A."/>
        </authorList>
    </citation>
    <scope>NUCLEOTIDE SEQUENCE [LARGE SCALE GENOMIC DNA]</scope>
    <source>
        <strain>5AT</strain>
    </source>
</reference>
<feature type="chain" id="PRO_1000202286" description="Ribonuclease HII">
    <location>
        <begin position="1"/>
        <end position="200"/>
    </location>
</feature>
<feature type="domain" description="RNase H type-2" evidence="2">
    <location>
        <begin position="11"/>
        <end position="200"/>
    </location>
</feature>
<feature type="binding site" evidence="1">
    <location>
        <position position="17"/>
    </location>
    <ligand>
        <name>a divalent metal cation</name>
        <dbReference type="ChEBI" id="CHEBI:60240"/>
    </ligand>
</feature>
<feature type="binding site" evidence="1">
    <location>
        <position position="18"/>
    </location>
    <ligand>
        <name>a divalent metal cation</name>
        <dbReference type="ChEBI" id="CHEBI:60240"/>
    </ligand>
</feature>
<feature type="binding site" evidence="1">
    <location>
        <position position="109"/>
    </location>
    <ligand>
        <name>a divalent metal cation</name>
        <dbReference type="ChEBI" id="CHEBI:60240"/>
    </ligand>
</feature>
<accession>C4K435</accession>
<evidence type="ECO:0000255" key="1">
    <source>
        <dbReference type="HAMAP-Rule" id="MF_00052"/>
    </source>
</evidence>
<evidence type="ECO:0000255" key="2">
    <source>
        <dbReference type="PROSITE-ProRule" id="PRU01319"/>
    </source>
</evidence>
<proteinExistence type="inferred from homology"/>
<name>RNH2_HAMD5</name>
<protein>
    <recommendedName>
        <fullName evidence="1">Ribonuclease HII</fullName>
        <shortName evidence="1">RNase HII</shortName>
        <ecNumber evidence="1">3.1.26.4</ecNumber>
    </recommendedName>
</protein>
<gene>
    <name evidence="1" type="primary">rnhB</name>
    <name type="ordered locus">HDEF_0586</name>
</gene>
<keyword id="KW-0963">Cytoplasm</keyword>
<keyword id="KW-0255">Endonuclease</keyword>
<keyword id="KW-0378">Hydrolase</keyword>
<keyword id="KW-0464">Manganese</keyword>
<keyword id="KW-0479">Metal-binding</keyword>
<keyword id="KW-0540">Nuclease</keyword>
<sequence length="200" mass="21730">MTSDFIYPEAQSIAGVDEVGRGPLAGPVVTAAVILDPKNPIIGLADSKTLSKKKRMALYEEITHKALAWSLGRAESKEIDEINIFHATLLAMQRAVNALGIKTDHVLIDGHICPILSIPSSSIVKGDSKVPEISAASILAKVTRDREMEALDKVFPGYGFAQHKGYPTAFHLEKLALLGPTEQHRRSFRPVRRALISLTG</sequence>
<comment type="function">
    <text evidence="1">Endonuclease that specifically degrades the RNA of RNA-DNA hybrids.</text>
</comment>
<comment type="catalytic activity">
    <reaction evidence="1">
        <text>Endonucleolytic cleavage to 5'-phosphomonoester.</text>
        <dbReference type="EC" id="3.1.26.4"/>
    </reaction>
</comment>
<comment type="cofactor">
    <cofactor evidence="1">
        <name>Mn(2+)</name>
        <dbReference type="ChEBI" id="CHEBI:29035"/>
    </cofactor>
    <cofactor evidence="1">
        <name>Mg(2+)</name>
        <dbReference type="ChEBI" id="CHEBI:18420"/>
    </cofactor>
    <text evidence="1">Manganese or magnesium. Binds 1 divalent metal ion per monomer in the absence of substrate. May bind a second metal ion after substrate binding.</text>
</comment>
<comment type="subcellular location">
    <subcellularLocation>
        <location evidence="1">Cytoplasm</location>
    </subcellularLocation>
</comment>
<comment type="similarity">
    <text evidence="1">Belongs to the RNase HII family.</text>
</comment>
<dbReference type="EC" id="3.1.26.4" evidence="1"/>
<dbReference type="EMBL" id="CP001277">
    <property type="protein sequence ID" value="ACQ67328.1"/>
    <property type="molecule type" value="Genomic_DNA"/>
</dbReference>
<dbReference type="RefSeq" id="WP_015873152.1">
    <property type="nucleotide sequence ID" value="NC_012751.1"/>
</dbReference>
<dbReference type="SMR" id="C4K435"/>
<dbReference type="STRING" id="572265.HDEF_0586"/>
<dbReference type="GeneID" id="66260460"/>
<dbReference type="KEGG" id="hde:HDEF_0586"/>
<dbReference type="eggNOG" id="COG0164">
    <property type="taxonomic scope" value="Bacteria"/>
</dbReference>
<dbReference type="HOGENOM" id="CLU_036532_3_2_6"/>
<dbReference type="Proteomes" id="UP000002334">
    <property type="component" value="Chromosome"/>
</dbReference>
<dbReference type="GO" id="GO:0005737">
    <property type="term" value="C:cytoplasm"/>
    <property type="evidence" value="ECO:0007669"/>
    <property type="project" value="UniProtKB-SubCell"/>
</dbReference>
<dbReference type="GO" id="GO:0032299">
    <property type="term" value="C:ribonuclease H2 complex"/>
    <property type="evidence" value="ECO:0007669"/>
    <property type="project" value="TreeGrafter"/>
</dbReference>
<dbReference type="GO" id="GO:0030145">
    <property type="term" value="F:manganese ion binding"/>
    <property type="evidence" value="ECO:0007669"/>
    <property type="project" value="UniProtKB-UniRule"/>
</dbReference>
<dbReference type="GO" id="GO:0003723">
    <property type="term" value="F:RNA binding"/>
    <property type="evidence" value="ECO:0007669"/>
    <property type="project" value="InterPro"/>
</dbReference>
<dbReference type="GO" id="GO:0004523">
    <property type="term" value="F:RNA-DNA hybrid ribonuclease activity"/>
    <property type="evidence" value="ECO:0007669"/>
    <property type="project" value="UniProtKB-UniRule"/>
</dbReference>
<dbReference type="GO" id="GO:0043137">
    <property type="term" value="P:DNA replication, removal of RNA primer"/>
    <property type="evidence" value="ECO:0007669"/>
    <property type="project" value="TreeGrafter"/>
</dbReference>
<dbReference type="GO" id="GO:0006298">
    <property type="term" value="P:mismatch repair"/>
    <property type="evidence" value="ECO:0007669"/>
    <property type="project" value="TreeGrafter"/>
</dbReference>
<dbReference type="CDD" id="cd07182">
    <property type="entry name" value="RNase_HII_bacteria_HII_like"/>
    <property type="match status" value="1"/>
</dbReference>
<dbReference type="FunFam" id="3.30.420.10:FF:000006">
    <property type="entry name" value="Ribonuclease HII"/>
    <property type="match status" value="1"/>
</dbReference>
<dbReference type="Gene3D" id="3.30.420.10">
    <property type="entry name" value="Ribonuclease H-like superfamily/Ribonuclease H"/>
    <property type="match status" value="1"/>
</dbReference>
<dbReference type="HAMAP" id="MF_00052_B">
    <property type="entry name" value="RNase_HII_B"/>
    <property type="match status" value="1"/>
</dbReference>
<dbReference type="InterPro" id="IPR022898">
    <property type="entry name" value="RNase_HII"/>
</dbReference>
<dbReference type="InterPro" id="IPR001352">
    <property type="entry name" value="RNase_HII/HIII"/>
</dbReference>
<dbReference type="InterPro" id="IPR024567">
    <property type="entry name" value="RNase_HII/HIII_dom"/>
</dbReference>
<dbReference type="InterPro" id="IPR012337">
    <property type="entry name" value="RNaseH-like_sf"/>
</dbReference>
<dbReference type="InterPro" id="IPR036397">
    <property type="entry name" value="RNaseH_sf"/>
</dbReference>
<dbReference type="NCBIfam" id="NF000594">
    <property type="entry name" value="PRK00015.1-1"/>
    <property type="match status" value="1"/>
</dbReference>
<dbReference type="NCBIfam" id="NF000595">
    <property type="entry name" value="PRK00015.1-3"/>
    <property type="match status" value="1"/>
</dbReference>
<dbReference type="NCBIfam" id="NF000596">
    <property type="entry name" value="PRK00015.1-4"/>
    <property type="match status" value="1"/>
</dbReference>
<dbReference type="PANTHER" id="PTHR10954">
    <property type="entry name" value="RIBONUCLEASE H2 SUBUNIT A"/>
    <property type="match status" value="1"/>
</dbReference>
<dbReference type="PANTHER" id="PTHR10954:SF18">
    <property type="entry name" value="RIBONUCLEASE HII"/>
    <property type="match status" value="1"/>
</dbReference>
<dbReference type="Pfam" id="PF01351">
    <property type="entry name" value="RNase_HII"/>
    <property type="match status" value="1"/>
</dbReference>
<dbReference type="SUPFAM" id="SSF53098">
    <property type="entry name" value="Ribonuclease H-like"/>
    <property type="match status" value="1"/>
</dbReference>
<dbReference type="PROSITE" id="PS51975">
    <property type="entry name" value="RNASE_H_2"/>
    <property type="match status" value="1"/>
</dbReference>
<organism>
    <name type="scientific">Hamiltonella defensa subsp. Acyrthosiphon pisum (strain 5AT)</name>
    <dbReference type="NCBI Taxonomy" id="572265"/>
    <lineage>
        <taxon>Bacteria</taxon>
        <taxon>Pseudomonadati</taxon>
        <taxon>Pseudomonadota</taxon>
        <taxon>Gammaproteobacteria</taxon>
        <taxon>Enterobacterales</taxon>
        <taxon>Enterobacteriaceae</taxon>
        <taxon>aphid secondary symbionts</taxon>
        <taxon>Candidatus Hamiltonella</taxon>
    </lineage>
</organism>